<keyword id="KW-0963">Cytoplasm</keyword>
<keyword id="KW-0378">Hydrolase</keyword>
<comment type="catalytic activity">
    <reaction evidence="1">
        <text>urea + 2 H2O + H(+) = hydrogencarbonate + 2 NH4(+)</text>
        <dbReference type="Rhea" id="RHEA:20557"/>
        <dbReference type="ChEBI" id="CHEBI:15377"/>
        <dbReference type="ChEBI" id="CHEBI:15378"/>
        <dbReference type="ChEBI" id="CHEBI:16199"/>
        <dbReference type="ChEBI" id="CHEBI:17544"/>
        <dbReference type="ChEBI" id="CHEBI:28938"/>
        <dbReference type="EC" id="3.5.1.5"/>
    </reaction>
</comment>
<comment type="pathway">
    <text evidence="1">Nitrogen metabolism; urea degradation; CO(2) and NH(3) from urea (urease route): step 1/1.</text>
</comment>
<comment type="subunit">
    <text evidence="1">Heterotrimer of UreA (gamma), UreB (beta) and UreC (alpha) subunits. Three heterotrimers associate to form the active enzyme.</text>
</comment>
<comment type="subcellular location">
    <subcellularLocation>
        <location evidence="1">Cytoplasm</location>
    </subcellularLocation>
</comment>
<comment type="similarity">
    <text evidence="1">Belongs to the urease gamma subunit family.</text>
</comment>
<evidence type="ECO:0000255" key="1">
    <source>
        <dbReference type="HAMAP-Rule" id="MF_00739"/>
    </source>
</evidence>
<proteinExistence type="inferred from homology"/>
<protein>
    <recommendedName>
        <fullName evidence="1">Urease subunit gamma</fullName>
        <ecNumber evidence="1">3.5.1.5</ecNumber>
    </recommendedName>
    <alternativeName>
        <fullName evidence="1">Urea amidohydrolase subunit gamma</fullName>
    </alternativeName>
</protein>
<reference key="1">
    <citation type="journal article" date="2009" name="Appl. Environ. Microbiol.">
        <title>Novel features of the polysaccharide-digesting gliding bacterium Flavobacterium johnsoniae as revealed by genome sequence analysis.</title>
        <authorList>
            <person name="McBride M.J."/>
            <person name="Xie G."/>
            <person name="Martens E.C."/>
            <person name="Lapidus A."/>
            <person name="Henrissat B."/>
            <person name="Rhodes R.G."/>
            <person name="Goltsman E."/>
            <person name="Wang W."/>
            <person name="Xu J."/>
            <person name="Hunnicutt D.W."/>
            <person name="Staroscik A.M."/>
            <person name="Hoover T.R."/>
            <person name="Cheng Y.Q."/>
            <person name="Stein J.L."/>
        </authorList>
    </citation>
    <scope>NUCLEOTIDE SEQUENCE [LARGE SCALE GENOMIC DNA]</scope>
    <source>
        <strain>ATCC 17061 / DSM 2064 / JCM 8514 / BCRC 14874 / CCUG 350202 / NBRC 14942 / NCIMB 11054 / UW101</strain>
    </source>
</reference>
<feature type="chain" id="PRO_1000083422" description="Urease subunit gamma">
    <location>
        <begin position="1"/>
        <end position="100"/>
    </location>
</feature>
<dbReference type="EC" id="3.5.1.5" evidence="1"/>
<dbReference type="EMBL" id="CP000685">
    <property type="protein sequence ID" value="ABQ07836.1"/>
    <property type="molecule type" value="Genomic_DNA"/>
</dbReference>
<dbReference type="RefSeq" id="WP_012026802.1">
    <property type="nucleotide sequence ID" value="NZ_MUGZ01000004.1"/>
</dbReference>
<dbReference type="SMR" id="A5FAD3"/>
<dbReference type="STRING" id="376686.Fjoh_4837"/>
<dbReference type="KEGG" id="fjo:Fjoh_4837"/>
<dbReference type="eggNOG" id="COG0831">
    <property type="taxonomic scope" value="Bacteria"/>
</dbReference>
<dbReference type="HOGENOM" id="CLU_145825_1_0_10"/>
<dbReference type="OrthoDB" id="9793527at2"/>
<dbReference type="UniPathway" id="UPA00258">
    <property type="reaction ID" value="UER00370"/>
</dbReference>
<dbReference type="Proteomes" id="UP000006694">
    <property type="component" value="Chromosome"/>
</dbReference>
<dbReference type="GO" id="GO:0005737">
    <property type="term" value="C:cytoplasm"/>
    <property type="evidence" value="ECO:0007669"/>
    <property type="project" value="UniProtKB-SubCell"/>
</dbReference>
<dbReference type="GO" id="GO:0016151">
    <property type="term" value="F:nickel cation binding"/>
    <property type="evidence" value="ECO:0007669"/>
    <property type="project" value="InterPro"/>
</dbReference>
<dbReference type="GO" id="GO:0009039">
    <property type="term" value="F:urease activity"/>
    <property type="evidence" value="ECO:0007669"/>
    <property type="project" value="UniProtKB-UniRule"/>
</dbReference>
<dbReference type="GO" id="GO:0043419">
    <property type="term" value="P:urea catabolic process"/>
    <property type="evidence" value="ECO:0007669"/>
    <property type="project" value="UniProtKB-UniRule"/>
</dbReference>
<dbReference type="CDD" id="cd00390">
    <property type="entry name" value="Urease_gamma"/>
    <property type="match status" value="1"/>
</dbReference>
<dbReference type="Gene3D" id="3.30.280.10">
    <property type="entry name" value="Urease, gamma-like subunit"/>
    <property type="match status" value="1"/>
</dbReference>
<dbReference type="HAMAP" id="MF_00739">
    <property type="entry name" value="Urease_gamma"/>
    <property type="match status" value="1"/>
</dbReference>
<dbReference type="InterPro" id="IPR012010">
    <property type="entry name" value="Urease_gamma"/>
</dbReference>
<dbReference type="InterPro" id="IPR002026">
    <property type="entry name" value="Urease_gamma/gamma-beta_su"/>
</dbReference>
<dbReference type="InterPro" id="IPR036463">
    <property type="entry name" value="Urease_gamma_sf"/>
</dbReference>
<dbReference type="InterPro" id="IPR050069">
    <property type="entry name" value="Urease_subunit"/>
</dbReference>
<dbReference type="NCBIfam" id="NF009712">
    <property type="entry name" value="PRK13241.1"/>
    <property type="match status" value="1"/>
</dbReference>
<dbReference type="NCBIfam" id="TIGR00193">
    <property type="entry name" value="urease_gam"/>
    <property type="match status" value="1"/>
</dbReference>
<dbReference type="PANTHER" id="PTHR33569">
    <property type="entry name" value="UREASE"/>
    <property type="match status" value="1"/>
</dbReference>
<dbReference type="PANTHER" id="PTHR33569:SF1">
    <property type="entry name" value="UREASE"/>
    <property type="match status" value="1"/>
</dbReference>
<dbReference type="Pfam" id="PF00547">
    <property type="entry name" value="Urease_gamma"/>
    <property type="match status" value="1"/>
</dbReference>
<dbReference type="PIRSF" id="PIRSF001223">
    <property type="entry name" value="Urease_gamma"/>
    <property type="match status" value="1"/>
</dbReference>
<dbReference type="SUPFAM" id="SSF54111">
    <property type="entry name" value="Urease, gamma-subunit"/>
    <property type="match status" value="1"/>
</dbReference>
<organism>
    <name type="scientific">Flavobacterium johnsoniae (strain ATCC 17061 / DSM 2064 / JCM 8514 / BCRC 14874 / CCUG 350202 / NBRC 14942 / NCIMB 11054 / UW101)</name>
    <name type="common">Cytophaga johnsonae</name>
    <dbReference type="NCBI Taxonomy" id="376686"/>
    <lineage>
        <taxon>Bacteria</taxon>
        <taxon>Pseudomonadati</taxon>
        <taxon>Bacteroidota</taxon>
        <taxon>Flavobacteriia</taxon>
        <taxon>Flavobacteriales</taxon>
        <taxon>Flavobacteriaceae</taxon>
        <taxon>Flavobacterium</taxon>
    </lineage>
</organism>
<name>URE3_FLAJ1</name>
<gene>
    <name evidence="1" type="primary">ureA</name>
    <name type="ordered locus">Fjoh_4837</name>
</gene>
<accession>A5FAD3</accession>
<sequence length="100" mass="11080">MHLTPRESEKLLLHLAGELAAKRKARGLKLNYPETIAYISSHLLEAARDGKSVAELMNYGATLLTRDDVMEGIAEMIHDVQIEATFPDGTKLVTVHSPIR</sequence>